<evidence type="ECO:0000255" key="1">
    <source>
        <dbReference type="HAMAP-Rule" id="MF_01368"/>
    </source>
</evidence>
<evidence type="ECO:0000305" key="2"/>
<protein>
    <recommendedName>
        <fullName evidence="1">Large ribosomal subunit protein bL17</fullName>
    </recommendedName>
    <alternativeName>
        <fullName evidence="2">50S ribosomal protein L17</fullName>
    </alternativeName>
</protein>
<name>RL17_BACAN</name>
<organism>
    <name type="scientific">Bacillus anthracis</name>
    <dbReference type="NCBI Taxonomy" id="1392"/>
    <lineage>
        <taxon>Bacteria</taxon>
        <taxon>Bacillati</taxon>
        <taxon>Bacillota</taxon>
        <taxon>Bacilli</taxon>
        <taxon>Bacillales</taxon>
        <taxon>Bacillaceae</taxon>
        <taxon>Bacillus</taxon>
        <taxon>Bacillus cereus group</taxon>
    </lineage>
</organism>
<sequence>MAYRKLGRTSAQRKAMLRDLATDLIINERIQTTETRAKELRSVVEKMITLGKRGDLHARRQAAAFIRNEVANAETGQDALQKLFADVAPRYAERQGGYTRIAKIGPRRGDAAPMVIIELV</sequence>
<comment type="subunit">
    <text evidence="1">Part of the 50S ribosomal subunit. Contacts protein L32.</text>
</comment>
<comment type="similarity">
    <text evidence="1">Belongs to the bacterial ribosomal protein bL17 family.</text>
</comment>
<accession>Q81VQ3</accession>
<accession>Q6I4Q6</accession>
<accession>Q6KYF2</accession>
<dbReference type="EMBL" id="AE016879">
    <property type="protein sequence ID" value="AAP24192.1"/>
    <property type="molecule type" value="Genomic_DNA"/>
</dbReference>
<dbReference type="EMBL" id="AE017225">
    <property type="protein sequence ID" value="AAT52475.1"/>
    <property type="molecule type" value="Genomic_DNA"/>
</dbReference>
<dbReference type="EMBL" id="AE017334">
    <property type="protein sequence ID" value="AAT29218.1"/>
    <property type="molecule type" value="Genomic_DNA"/>
</dbReference>
<dbReference type="RefSeq" id="NP_842706.1">
    <property type="nucleotide sequence ID" value="NC_003997.3"/>
</dbReference>
<dbReference type="RefSeq" id="WP_000331490.1">
    <property type="nucleotide sequence ID" value="NZ_WXXJ01000051.1"/>
</dbReference>
<dbReference type="RefSeq" id="YP_026424.1">
    <property type="nucleotide sequence ID" value="NC_005945.1"/>
</dbReference>
<dbReference type="SMR" id="Q81VQ3"/>
<dbReference type="STRING" id="261594.GBAA_0138"/>
<dbReference type="DNASU" id="1087068"/>
<dbReference type="GeneID" id="93010915"/>
<dbReference type="KEGG" id="ban:BA_0138"/>
<dbReference type="KEGG" id="bar:GBAA_0138"/>
<dbReference type="KEGG" id="bat:BAS0138"/>
<dbReference type="PATRIC" id="fig|198094.11.peg.135"/>
<dbReference type="eggNOG" id="COG0203">
    <property type="taxonomic scope" value="Bacteria"/>
</dbReference>
<dbReference type="HOGENOM" id="CLU_074407_2_2_9"/>
<dbReference type="OMA" id="EHKRINT"/>
<dbReference type="OrthoDB" id="9809073at2"/>
<dbReference type="Proteomes" id="UP000000427">
    <property type="component" value="Chromosome"/>
</dbReference>
<dbReference type="Proteomes" id="UP000000594">
    <property type="component" value="Chromosome"/>
</dbReference>
<dbReference type="GO" id="GO:0022625">
    <property type="term" value="C:cytosolic large ribosomal subunit"/>
    <property type="evidence" value="ECO:0007669"/>
    <property type="project" value="TreeGrafter"/>
</dbReference>
<dbReference type="GO" id="GO:0003735">
    <property type="term" value="F:structural constituent of ribosome"/>
    <property type="evidence" value="ECO:0007669"/>
    <property type="project" value="InterPro"/>
</dbReference>
<dbReference type="GO" id="GO:0006412">
    <property type="term" value="P:translation"/>
    <property type="evidence" value="ECO:0007669"/>
    <property type="project" value="UniProtKB-UniRule"/>
</dbReference>
<dbReference type="FunFam" id="3.90.1030.10:FF:000002">
    <property type="entry name" value="50S ribosomal protein L17"/>
    <property type="match status" value="1"/>
</dbReference>
<dbReference type="Gene3D" id="3.90.1030.10">
    <property type="entry name" value="Ribosomal protein L17"/>
    <property type="match status" value="1"/>
</dbReference>
<dbReference type="HAMAP" id="MF_01368">
    <property type="entry name" value="Ribosomal_bL17"/>
    <property type="match status" value="1"/>
</dbReference>
<dbReference type="InterPro" id="IPR000456">
    <property type="entry name" value="Ribosomal_bL17"/>
</dbReference>
<dbReference type="InterPro" id="IPR047859">
    <property type="entry name" value="Ribosomal_bL17_CS"/>
</dbReference>
<dbReference type="InterPro" id="IPR036373">
    <property type="entry name" value="Ribosomal_bL17_sf"/>
</dbReference>
<dbReference type="NCBIfam" id="TIGR00059">
    <property type="entry name" value="L17"/>
    <property type="match status" value="1"/>
</dbReference>
<dbReference type="PANTHER" id="PTHR14413:SF16">
    <property type="entry name" value="LARGE RIBOSOMAL SUBUNIT PROTEIN BL17M"/>
    <property type="match status" value="1"/>
</dbReference>
<dbReference type="PANTHER" id="PTHR14413">
    <property type="entry name" value="RIBOSOMAL PROTEIN L17"/>
    <property type="match status" value="1"/>
</dbReference>
<dbReference type="Pfam" id="PF01196">
    <property type="entry name" value="Ribosomal_L17"/>
    <property type="match status" value="1"/>
</dbReference>
<dbReference type="SUPFAM" id="SSF64263">
    <property type="entry name" value="Prokaryotic ribosomal protein L17"/>
    <property type="match status" value="1"/>
</dbReference>
<dbReference type="PROSITE" id="PS01167">
    <property type="entry name" value="RIBOSOMAL_L17"/>
    <property type="match status" value="1"/>
</dbReference>
<proteinExistence type="inferred from homology"/>
<reference key="1">
    <citation type="journal article" date="2003" name="Nature">
        <title>The genome sequence of Bacillus anthracis Ames and comparison to closely related bacteria.</title>
        <authorList>
            <person name="Read T.D."/>
            <person name="Peterson S.N."/>
            <person name="Tourasse N.J."/>
            <person name="Baillie L.W."/>
            <person name="Paulsen I.T."/>
            <person name="Nelson K.E."/>
            <person name="Tettelin H."/>
            <person name="Fouts D.E."/>
            <person name="Eisen J.A."/>
            <person name="Gill S.R."/>
            <person name="Holtzapple E.K."/>
            <person name="Okstad O.A."/>
            <person name="Helgason E."/>
            <person name="Rilstone J."/>
            <person name="Wu M."/>
            <person name="Kolonay J.F."/>
            <person name="Beanan M.J."/>
            <person name="Dodson R.J."/>
            <person name="Brinkac L.M."/>
            <person name="Gwinn M.L."/>
            <person name="DeBoy R.T."/>
            <person name="Madpu R."/>
            <person name="Daugherty S.C."/>
            <person name="Durkin A.S."/>
            <person name="Haft D.H."/>
            <person name="Nelson W.C."/>
            <person name="Peterson J.D."/>
            <person name="Pop M."/>
            <person name="Khouri H.M."/>
            <person name="Radune D."/>
            <person name="Benton J.L."/>
            <person name="Mahamoud Y."/>
            <person name="Jiang L."/>
            <person name="Hance I.R."/>
            <person name="Weidman J.F."/>
            <person name="Berry K.J."/>
            <person name="Plaut R.D."/>
            <person name="Wolf A.M."/>
            <person name="Watkins K.L."/>
            <person name="Nierman W.C."/>
            <person name="Hazen A."/>
            <person name="Cline R.T."/>
            <person name="Redmond C."/>
            <person name="Thwaite J.E."/>
            <person name="White O."/>
            <person name="Salzberg S.L."/>
            <person name="Thomason B."/>
            <person name="Friedlander A.M."/>
            <person name="Koehler T.M."/>
            <person name="Hanna P.C."/>
            <person name="Kolstoe A.-B."/>
            <person name="Fraser C.M."/>
        </authorList>
    </citation>
    <scope>NUCLEOTIDE SEQUENCE [LARGE SCALE GENOMIC DNA]</scope>
    <source>
        <strain>Ames / isolate Porton</strain>
    </source>
</reference>
<reference key="2">
    <citation type="submission" date="2004-01" db="EMBL/GenBank/DDBJ databases">
        <title>Complete genome sequence of Bacillus anthracis Sterne.</title>
        <authorList>
            <person name="Brettin T.S."/>
            <person name="Bruce D."/>
            <person name="Challacombe J.F."/>
            <person name="Gilna P."/>
            <person name="Han C."/>
            <person name="Hill K."/>
            <person name="Hitchcock P."/>
            <person name="Jackson P."/>
            <person name="Keim P."/>
            <person name="Longmire J."/>
            <person name="Lucas S."/>
            <person name="Okinaka R."/>
            <person name="Richardson P."/>
            <person name="Rubin E."/>
            <person name="Tice H."/>
        </authorList>
    </citation>
    <scope>NUCLEOTIDE SEQUENCE [LARGE SCALE GENOMIC DNA]</scope>
    <source>
        <strain>Sterne</strain>
    </source>
</reference>
<reference key="3">
    <citation type="journal article" date="2009" name="J. Bacteriol.">
        <title>The complete genome sequence of Bacillus anthracis Ames 'Ancestor'.</title>
        <authorList>
            <person name="Ravel J."/>
            <person name="Jiang L."/>
            <person name="Stanley S.T."/>
            <person name="Wilson M.R."/>
            <person name="Decker R.S."/>
            <person name="Read T.D."/>
            <person name="Worsham P."/>
            <person name="Keim P.S."/>
            <person name="Salzberg S.L."/>
            <person name="Fraser-Liggett C.M."/>
            <person name="Rasko D.A."/>
        </authorList>
    </citation>
    <scope>NUCLEOTIDE SEQUENCE [LARGE SCALE GENOMIC DNA]</scope>
    <source>
        <strain>Ames ancestor</strain>
    </source>
</reference>
<gene>
    <name evidence="1" type="primary">rplQ</name>
    <name type="ordered locus">BA_0138</name>
    <name type="ordered locus">GBAA_0138</name>
    <name type="ordered locus">BAS0138</name>
</gene>
<keyword id="KW-1185">Reference proteome</keyword>
<keyword id="KW-0687">Ribonucleoprotein</keyword>
<keyword id="KW-0689">Ribosomal protein</keyword>
<feature type="chain" id="PRO_0000267821" description="Large ribosomal subunit protein bL17">
    <location>
        <begin position="1"/>
        <end position="120"/>
    </location>
</feature>